<feature type="chain" id="PRO_1000097232" description="Lipoprotein signal peptidase">
    <location>
        <begin position="1"/>
        <end position="170"/>
    </location>
</feature>
<feature type="transmembrane region" description="Helical" evidence="1">
    <location>
        <begin position="9"/>
        <end position="29"/>
    </location>
</feature>
<feature type="transmembrane region" description="Helical" evidence="1">
    <location>
        <begin position="72"/>
        <end position="92"/>
    </location>
</feature>
<feature type="transmembrane region" description="Helical" evidence="1">
    <location>
        <begin position="93"/>
        <end position="113"/>
    </location>
</feature>
<feature type="transmembrane region" description="Helical" evidence="1">
    <location>
        <begin position="142"/>
        <end position="162"/>
    </location>
</feature>
<feature type="active site" evidence="1">
    <location>
        <position position="124"/>
    </location>
</feature>
<feature type="active site" evidence="1">
    <location>
        <position position="146"/>
    </location>
</feature>
<protein>
    <recommendedName>
        <fullName evidence="1">Lipoprotein signal peptidase</fullName>
        <ecNumber evidence="1">3.4.23.36</ecNumber>
    </recommendedName>
    <alternativeName>
        <fullName evidence="1">Prolipoprotein signal peptidase</fullName>
    </alternativeName>
    <alternativeName>
        <fullName evidence="1">Signal peptidase II</fullName>
        <shortName evidence="1">SPase II</shortName>
    </alternativeName>
</protein>
<sequence length="170" mass="19509">MNIDRNRLIGSVIFIFILVFIDQWSKYLVVKYISIGTEYLSFFGDFFKIIHVRNTGILFSIGANINSSLKNLFFLVIPIIILVFVFCFILKETNKIARIALILILSGGIGNIIDRLFRPLGVVDFLDVKFFGIFGLQRWPTFNFADSYVVIGITLFIIYDLFAKNKSTDL</sequence>
<gene>
    <name evidence="1" type="primary">lspA</name>
    <name type="ordered locus">BH0469</name>
</gene>
<evidence type="ECO:0000255" key="1">
    <source>
        <dbReference type="HAMAP-Rule" id="MF_00161"/>
    </source>
</evidence>
<reference key="1">
    <citation type="submission" date="2004-12" db="EMBL/GenBank/DDBJ databases">
        <title>The genome sequence of Borrelia hermsii and Borrelia turicatae: comparative analysis of two agents of endemic N. America relapsing fever.</title>
        <authorList>
            <person name="Porcella S.F."/>
            <person name="Raffel S.J."/>
            <person name="Schrumpf M.E."/>
            <person name="Montgomery B."/>
            <person name="Smith T."/>
            <person name="Schwan T.G."/>
        </authorList>
    </citation>
    <scope>NUCLEOTIDE SEQUENCE [LARGE SCALE GENOMIC DNA]</scope>
    <source>
        <strain>HS1 / DAH</strain>
    </source>
</reference>
<name>LSPA_BORHD</name>
<proteinExistence type="inferred from homology"/>
<comment type="function">
    <text evidence="1">This protein specifically catalyzes the removal of signal peptides from prolipoproteins.</text>
</comment>
<comment type="catalytic activity">
    <reaction evidence="1">
        <text>Release of signal peptides from bacterial membrane prolipoproteins. Hydrolyzes -Xaa-Yaa-Zaa-|-(S,diacylglyceryl)Cys-, in which Xaa is hydrophobic (preferably Leu), and Yaa (Ala or Ser) and Zaa (Gly or Ala) have small, neutral side chains.</text>
        <dbReference type="EC" id="3.4.23.36"/>
    </reaction>
</comment>
<comment type="pathway">
    <text evidence="1">Protein modification; lipoprotein biosynthesis (signal peptide cleavage).</text>
</comment>
<comment type="subcellular location">
    <subcellularLocation>
        <location evidence="1">Cell inner membrane</location>
        <topology evidence="1">Multi-pass membrane protein</topology>
    </subcellularLocation>
</comment>
<comment type="similarity">
    <text evidence="1">Belongs to the peptidase A8 family.</text>
</comment>
<keyword id="KW-0064">Aspartyl protease</keyword>
<keyword id="KW-0997">Cell inner membrane</keyword>
<keyword id="KW-1003">Cell membrane</keyword>
<keyword id="KW-0378">Hydrolase</keyword>
<keyword id="KW-0472">Membrane</keyword>
<keyword id="KW-0645">Protease</keyword>
<keyword id="KW-0812">Transmembrane</keyword>
<keyword id="KW-1133">Transmembrane helix</keyword>
<accession>B2S0H3</accession>
<organism>
    <name type="scientific">Borrelia hermsii (strain HS1 / DAH)</name>
    <dbReference type="NCBI Taxonomy" id="314723"/>
    <lineage>
        <taxon>Bacteria</taxon>
        <taxon>Pseudomonadati</taxon>
        <taxon>Spirochaetota</taxon>
        <taxon>Spirochaetia</taxon>
        <taxon>Spirochaetales</taxon>
        <taxon>Borreliaceae</taxon>
        <taxon>Borrelia</taxon>
    </lineage>
</organism>
<dbReference type="EC" id="3.4.23.36" evidence="1"/>
<dbReference type="EMBL" id="CP000048">
    <property type="protein sequence ID" value="AAX16979.1"/>
    <property type="molecule type" value="Genomic_DNA"/>
</dbReference>
<dbReference type="RefSeq" id="WP_012422235.1">
    <property type="nucleotide sequence ID" value="NZ_CP073136.1"/>
</dbReference>
<dbReference type="SMR" id="B2S0H3"/>
<dbReference type="GeneID" id="71843288"/>
<dbReference type="KEGG" id="bhr:BH0469"/>
<dbReference type="HOGENOM" id="CLU_083252_3_1_12"/>
<dbReference type="UniPathway" id="UPA00665"/>
<dbReference type="Proteomes" id="UP000008834">
    <property type="component" value="Chromosome"/>
</dbReference>
<dbReference type="GO" id="GO:0005886">
    <property type="term" value="C:plasma membrane"/>
    <property type="evidence" value="ECO:0007669"/>
    <property type="project" value="UniProtKB-SubCell"/>
</dbReference>
<dbReference type="GO" id="GO:0004190">
    <property type="term" value="F:aspartic-type endopeptidase activity"/>
    <property type="evidence" value="ECO:0007669"/>
    <property type="project" value="UniProtKB-UniRule"/>
</dbReference>
<dbReference type="GO" id="GO:0006508">
    <property type="term" value="P:proteolysis"/>
    <property type="evidence" value="ECO:0007669"/>
    <property type="project" value="UniProtKB-KW"/>
</dbReference>
<dbReference type="HAMAP" id="MF_00161">
    <property type="entry name" value="LspA"/>
    <property type="match status" value="1"/>
</dbReference>
<dbReference type="InterPro" id="IPR001872">
    <property type="entry name" value="Peptidase_A8"/>
</dbReference>
<dbReference type="NCBIfam" id="TIGR00077">
    <property type="entry name" value="lspA"/>
    <property type="match status" value="1"/>
</dbReference>
<dbReference type="PANTHER" id="PTHR33695">
    <property type="entry name" value="LIPOPROTEIN SIGNAL PEPTIDASE"/>
    <property type="match status" value="1"/>
</dbReference>
<dbReference type="PANTHER" id="PTHR33695:SF1">
    <property type="entry name" value="LIPOPROTEIN SIGNAL PEPTIDASE"/>
    <property type="match status" value="1"/>
</dbReference>
<dbReference type="Pfam" id="PF01252">
    <property type="entry name" value="Peptidase_A8"/>
    <property type="match status" value="1"/>
</dbReference>
<dbReference type="PRINTS" id="PR00781">
    <property type="entry name" value="LIPOSIGPTASE"/>
</dbReference>
<dbReference type="PROSITE" id="PS00855">
    <property type="entry name" value="SPASE_II"/>
    <property type="match status" value="1"/>
</dbReference>